<evidence type="ECO:0000255" key="1">
    <source>
        <dbReference type="HAMAP-Rule" id="MF_01337"/>
    </source>
</evidence>
<evidence type="ECO:0000305" key="2"/>
<accession>B0BUP4</accession>
<dbReference type="EMBL" id="CP000766">
    <property type="protein sequence ID" value="ABY72954.1"/>
    <property type="molecule type" value="Genomic_DNA"/>
</dbReference>
<dbReference type="RefSeq" id="WP_012151141.1">
    <property type="nucleotide sequence ID" value="NC_010263.3"/>
</dbReference>
<dbReference type="SMR" id="B0BUP4"/>
<dbReference type="GeneID" id="79937654"/>
<dbReference type="KEGG" id="rrj:RrIowa_1181"/>
<dbReference type="eggNOG" id="COG0256">
    <property type="taxonomic scope" value="Bacteria"/>
</dbReference>
<dbReference type="HOGENOM" id="CLU_098841_0_1_5"/>
<dbReference type="Proteomes" id="UP000000796">
    <property type="component" value="Chromosome"/>
</dbReference>
<dbReference type="GO" id="GO:0022625">
    <property type="term" value="C:cytosolic large ribosomal subunit"/>
    <property type="evidence" value="ECO:0007669"/>
    <property type="project" value="TreeGrafter"/>
</dbReference>
<dbReference type="GO" id="GO:0008097">
    <property type="term" value="F:5S rRNA binding"/>
    <property type="evidence" value="ECO:0007669"/>
    <property type="project" value="TreeGrafter"/>
</dbReference>
<dbReference type="GO" id="GO:0003735">
    <property type="term" value="F:structural constituent of ribosome"/>
    <property type="evidence" value="ECO:0007669"/>
    <property type="project" value="InterPro"/>
</dbReference>
<dbReference type="GO" id="GO:0006412">
    <property type="term" value="P:translation"/>
    <property type="evidence" value="ECO:0007669"/>
    <property type="project" value="UniProtKB-UniRule"/>
</dbReference>
<dbReference type="CDD" id="cd00432">
    <property type="entry name" value="Ribosomal_L18_L5e"/>
    <property type="match status" value="1"/>
</dbReference>
<dbReference type="FunFam" id="3.30.420.100:FF:000001">
    <property type="entry name" value="50S ribosomal protein L18"/>
    <property type="match status" value="1"/>
</dbReference>
<dbReference type="Gene3D" id="3.30.420.100">
    <property type="match status" value="1"/>
</dbReference>
<dbReference type="HAMAP" id="MF_01337_B">
    <property type="entry name" value="Ribosomal_uL18_B"/>
    <property type="match status" value="1"/>
</dbReference>
<dbReference type="InterPro" id="IPR004389">
    <property type="entry name" value="Ribosomal_uL18_bac-type"/>
</dbReference>
<dbReference type="InterPro" id="IPR005484">
    <property type="entry name" value="Ribosomal_uL18_bac/euk"/>
</dbReference>
<dbReference type="NCBIfam" id="TIGR00060">
    <property type="entry name" value="L18_bact"/>
    <property type="match status" value="1"/>
</dbReference>
<dbReference type="PANTHER" id="PTHR12899">
    <property type="entry name" value="39S RIBOSOMAL PROTEIN L18, MITOCHONDRIAL"/>
    <property type="match status" value="1"/>
</dbReference>
<dbReference type="PANTHER" id="PTHR12899:SF3">
    <property type="entry name" value="LARGE RIBOSOMAL SUBUNIT PROTEIN UL18M"/>
    <property type="match status" value="1"/>
</dbReference>
<dbReference type="Pfam" id="PF00861">
    <property type="entry name" value="Ribosomal_L18p"/>
    <property type="match status" value="1"/>
</dbReference>
<dbReference type="SUPFAM" id="SSF53137">
    <property type="entry name" value="Translational machinery components"/>
    <property type="match status" value="1"/>
</dbReference>
<protein>
    <recommendedName>
        <fullName evidence="1">Large ribosomal subunit protein uL18</fullName>
    </recommendedName>
    <alternativeName>
        <fullName evidence="2">50S ribosomal protein L18</fullName>
    </alternativeName>
</protein>
<proteinExistence type="inferred from homology"/>
<organism>
    <name type="scientific">Rickettsia rickettsii (strain Iowa)</name>
    <dbReference type="NCBI Taxonomy" id="452659"/>
    <lineage>
        <taxon>Bacteria</taxon>
        <taxon>Pseudomonadati</taxon>
        <taxon>Pseudomonadota</taxon>
        <taxon>Alphaproteobacteria</taxon>
        <taxon>Rickettsiales</taxon>
        <taxon>Rickettsiaceae</taxon>
        <taxon>Rickettsieae</taxon>
        <taxon>Rickettsia</taxon>
        <taxon>spotted fever group</taxon>
    </lineage>
</organism>
<feature type="chain" id="PRO_1000086680" description="Large ribosomal subunit protein uL18">
    <location>
        <begin position="1"/>
        <end position="115"/>
    </location>
</feature>
<name>RL18_RICRO</name>
<gene>
    <name evidence="1" type="primary">rplR</name>
    <name type="ordered locus">RrIowa_1181</name>
</gene>
<comment type="function">
    <text evidence="1">This is one of the proteins that bind and probably mediate the attachment of the 5S RNA into the large ribosomal subunit, where it forms part of the central protuberance.</text>
</comment>
<comment type="subunit">
    <text evidence="1">Part of the 50S ribosomal subunit; part of the 5S rRNA/L5/L18/L25 subcomplex. Contacts the 5S and 23S rRNAs.</text>
</comment>
<comment type="similarity">
    <text evidence="1">Belongs to the universal ribosomal protein uL18 family.</text>
</comment>
<sequence length="115" mass="13056">MRSAKLKFEKRRSRIRHKISKTSNRVRLSIFKSGRHIYAQIIDDSKSITIAAASTLDEKRKKSHCNIEHAIKVGEEIAKKAYAAGIKDVVFDRGGYKYHGVVKALADAAREKIKF</sequence>
<keyword id="KW-0687">Ribonucleoprotein</keyword>
<keyword id="KW-0689">Ribosomal protein</keyword>
<keyword id="KW-0694">RNA-binding</keyword>
<keyword id="KW-0699">rRNA-binding</keyword>
<reference key="1">
    <citation type="journal article" date="2008" name="Infect. Immun.">
        <title>Genomic comparison of virulent Rickettsia rickettsii Sheila Smith and avirulent Rickettsia rickettsii Iowa.</title>
        <authorList>
            <person name="Ellison D.W."/>
            <person name="Clark T.R."/>
            <person name="Sturdevant D.E."/>
            <person name="Virtaneva K."/>
            <person name="Porcella S.F."/>
            <person name="Hackstadt T."/>
        </authorList>
    </citation>
    <scope>NUCLEOTIDE SEQUENCE [LARGE SCALE GENOMIC DNA]</scope>
    <source>
        <strain>Iowa</strain>
    </source>
</reference>